<accession>Q57RF3</accession>
<feature type="chain" id="PRO_1000054132" description="Cyclic pyranopterin monophosphate synthase">
    <location>
        <begin position="1"/>
        <end position="161"/>
    </location>
</feature>
<feature type="active site" evidence="1">
    <location>
        <position position="128"/>
    </location>
</feature>
<feature type="binding site" evidence="1">
    <location>
        <begin position="75"/>
        <end position="77"/>
    </location>
    <ligand>
        <name>substrate</name>
    </ligand>
</feature>
<feature type="binding site" evidence="1">
    <location>
        <begin position="113"/>
        <end position="114"/>
    </location>
    <ligand>
        <name>substrate</name>
    </ligand>
</feature>
<dbReference type="EC" id="4.6.1.17" evidence="1"/>
<dbReference type="EMBL" id="AE017220">
    <property type="protein sequence ID" value="AAX64708.1"/>
    <property type="molecule type" value="Genomic_DNA"/>
</dbReference>
<dbReference type="RefSeq" id="WP_000080894.1">
    <property type="nucleotide sequence ID" value="NC_006905.1"/>
</dbReference>
<dbReference type="SMR" id="Q57RF3"/>
<dbReference type="KEGG" id="sec:SCH_0802"/>
<dbReference type="HOGENOM" id="CLU_074693_1_1_6"/>
<dbReference type="UniPathway" id="UPA00344"/>
<dbReference type="Proteomes" id="UP000000538">
    <property type="component" value="Chromosome"/>
</dbReference>
<dbReference type="GO" id="GO:0061799">
    <property type="term" value="F:cyclic pyranopterin monophosphate synthase activity"/>
    <property type="evidence" value="ECO:0007669"/>
    <property type="project" value="UniProtKB-UniRule"/>
</dbReference>
<dbReference type="GO" id="GO:0006777">
    <property type="term" value="P:Mo-molybdopterin cofactor biosynthetic process"/>
    <property type="evidence" value="ECO:0007669"/>
    <property type="project" value="UniProtKB-UniRule"/>
</dbReference>
<dbReference type="CDD" id="cd01420">
    <property type="entry name" value="MoaC_PE"/>
    <property type="match status" value="1"/>
</dbReference>
<dbReference type="FunFam" id="3.30.70.640:FF:000001">
    <property type="entry name" value="Cyclic pyranopterin monophosphate synthase"/>
    <property type="match status" value="1"/>
</dbReference>
<dbReference type="Gene3D" id="3.30.70.640">
    <property type="entry name" value="Molybdopterin cofactor biosynthesis C (MoaC) domain"/>
    <property type="match status" value="1"/>
</dbReference>
<dbReference type="HAMAP" id="MF_01224_B">
    <property type="entry name" value="MoaC_B"/>
    <property type="match status" value="1"/>
</dbReference>
<dbReference type="InterPro" id="IPR023045">
    <property type="entry name" value="MoaC"/>
</dbReference>
<dbReference type="InterPro" id="IPR047594">
    <property type="entry name" value="MoaC_bact/euk"/>
</dbReference>
<dbReference type="InterPro" id="IPR036522">
    <property type="entry name" value="MoaC_sf"/>
</dbReference>
<dbReference type="InterPro" id="IPR050105">
    <property type="entry name" value="MoCo_biosynth_MoaA/MoaC"/>
</dbReference>
<dbReference type="InterPro" id="IPR002820">
    <property type="entry name" value="Mopterin_CF_biosynth-C_dom"/>
</dbReference>
<dbReference type="NCBIfam" id="TIGR00581">
    <property type="entry name" value="moaC"/>
    <property type="match status" value="1"/>
</dbReference>
<dbReference type="NCBIfam" id="NF006870">
    <property type="entry name" value="PRK09364.1"/>
    <property type="match status" value="1"/>
</dbReference>
<dbReference type="PANTHER" id="PTHR22960">
    <property type="entry name" value="MOLYBDOPTERIN COFACTOR SYNTHESIS PROTEIN A"/>
    <property type="match status" value="1"/>
</dbReference>
<dbReference type="Pfam" id="PF01967">
    <property type="entry name" value="MoaC"/>
    <property type="match status" value="1"/>
</dbReference>
<dbReference type="SUPFAM" id="SSF55040">
    <property type="entry name" value="Molybdenum cofactor biosynthesis protein C, MoaC"/>
    <property type="match status" value="1"/>
</dbReference>
<gene>
    <name evidence="1" type="primary">moaC</name>
    <name type="ordered locus">SCH_0802</name>
</gene>
<keyword id="KW-0456">Lyase</keyword>
<keyword id="KW-0501">Molybdenum cofactor biosynthesis</keyword>
<reference key="1">
    <citation type="journal article" date="2005" name="Nucleic Acids Res.">
        <title>The genome sequence of Salmonella enterica serovar Choleraesuis, a highly invasive and resistant zoonotic pathogen.</title>
        <authorList>
            <person name="Chiu C.-H."/>
            <person name="Tang P."/>
            <person name="Chu C."/>
            <person name="Hu S."/>
            <person name="Bao Q."/>
            <person name="Yu J."/>
            <person name="Chou Y.-Y."/>
            <person name="Wang H.-S."/>
            <person name="Lee Y.-S."/>
        </authorList>
    </citation>
    <scope>NUCLEOTIDE SEQUENCE [LARGE SCALE GENOMIC DNA]</scope>
    <source>
        <strain>SC-B67</strain>
    </source>
</reference>
<protein>
    <recommendedName>
        <fullName evidence="1">Cyclic pyranopterin monophosphate synthase</fullName>
        <ecNumber evidence="1">4.6.1.17</ecNumber>
    </recommendedName>
    <alternativeName>
        <fullName evidence="1">Molybdenum cofactor biosynthesis protein C</fullName>
    </alternativeName>
</protein>
<proteinExistence type="inferred from homology"/>
<comment type="function">
    <text evidence="1">Catalyzes the conversion of (8S)-3',8-cyclo-7,8-dihydroguanosine 5'-triphosphate to cyclic pyranopterin monophosphate (cPMP).</text>
</comment>
<comment type="catalytic activity">
    <reaction evidence="1">
        <text>(8S)-3',8-cyclo-7,8-dihydroguanosine 5'-triphosphate = cyclic pyranopterin phosphate + diphosphate</text>
        <dbReference type="Rhea" id="RHEA:49580"/>
        <dbReference type="ChEBI" id="CHEBI:33019"/>
        <dbReference type="ChEBI" id="CHEBI:59648"/>
        <dbReference type="ChEBI" id="CHEBI:131766"/>
        <dbReference type="EC" id="4.6.1.17"/>
    </reaction>
</comment>
<comment type="pathway">
    <text evidence="1">Cofactor biosynthesis; molybdopterin biosynthesis.</text>
</comment>
<comment type="subunit">
    <text evidence="1">Homohexamer; trimer of dimers.</text>
</comment>
<comment type="similarity">
    <text evidence="1">Belongs to the MoaC family.</text>
</comment>
<organism>
    <name type="scientific">Salmonella choleraesuis (strain SC-B67)</name>
    <dbReference type="NCBI Taxonomy" id="321314"/>
    <lineage>
        <taxon>Bacteria</taxon>
        <taxon>Pseudomonadati</taxon>
        <taxon>Pseudomonadota</taxon>
        <taxon>Gammaproteobacteria</taxon>
        <taxon>Enterobacterales</taxon>
        <taxon>Enterobacteriaceae</taxon>
        <taxon>Salmonella</taxon>
    </lineage>
</organism>
<sequence>MSQLTHINAAGEAHMVDVSAKAETVREARAEAFVTMRSETLAMIVDGKHHKGDVFATARIAGIQAAKRTWELIPLCHPLLLSKVEIQLQAEPEHNRVRIESLCRLTGKTGVEMEALTAASVAALTIYDMCKAVQKDMVIGPVRLLAKSGGKSGDFKVDAHD</sequence>
<name>MOAC_SALCH</name>
<evidence type="ECO:0000255" key="1">
    <source>
        <dbReference type="HAMAP-Rule" id="MF_01224"/>
    </source>
</evidence>